<name>HBB_HEMAK</name>
<proteinExistence type="evidence at protein level"/>
<accession>P56692</accession>
<reference key="1">
    <citation type="journal article" date="1999" name="Acta Crystallogr. D">
        <title>Structures of the deoxy and CO forms of haemoglobin from Dasyatis akajei, a cartilaginous fish.</title>
        <authorList>
            <person name="Chong K.T."/>
            <person name="Miyazaki G."/>
            <person name="Morimoto H."/>
            <person name="Oda Y."/>
            <person name="Park S.-Y."/>
        </authorList>
    </citation>
    <scope>NUCLEOTIDE SEQUENCE [MRNA]</scope>
    <scope>X-RAY CRYSTALLOGRAPHY (1.60 ANGSTROMS) OF 2-142 IN COMPLEX WITH HEME</scope>
    <source>
        <tissue>Blood</tissue>
    </source>
</reference>
<feature type="initiator methionine" description="Removed">
    <location>
        <position position="1"/>
    </location>
</feature>
<feature type="chain" id="PRO_0000052944" description="Hemoglobin subunit beta">
    <location>
        <begin position="2"/>
        <end position="142"/>
    </location>
</feature>
<feature type="domain" description="Globin" evidence="2">
    <location>
        <begin position="3"/>
        <end position="142"/>
    </location>
</feature>
<feature type="binding site" description="distal binding residue" evidence="1">
    <location>
        <position position="60"/>
    </location>
    <ligand>
        <name>heme b</name>
        <dbReference type="ChEBI" id="CHEBI:60344"/>
    </ligand>
    <ligandPart>
        <name>Fe</name>
        <dbReference type="ChEBI" id="CHEBI:18248"/>
    </ligandPart>
</feature>
<feature type="binding site" description="proximal binding residue" evidence="3 4 5">
    <location>
        <position position="89"/>
    </location>
    <ligand>
        <name>heme b</name>
        <dbReference type="ChEBI" id="CHEBI:60344"/>
    </ligand>
    <ligandPart>
        <name>Fe</name>
        <dbReference type="ChEBI" id="CHEBI:18248"/>
    </ligandPart>
</feature>
<feature type="helix" evidence="6">
    <location>
        <begin position="6"/>
        <end position="18"/>
    </location>
</feature>
<feature type="helix" evidence="6">
    <location>
        <begin position="21"/>
        <end position="35"/>
    </location>
</feature>
<feature type="helix" evidence="6">
    <location>
        <begin position="37"/>
        <end position="40"/>
    </location>
</feature>
<feature type="helix" evidence="6">
    <location>
        <begin position="44"/>
        <end position="46"/>
    </location>
</feature>
<feature type="helix" evidence="6">
    <location>
        <begin position="55"/>
        <end position="73"/>
    </location>
</feature>
<feature type="turn" evidence="6">
    <location>
        <begin position="74"/>
        <end position="76"/>
    </location>
</feature>
<feature type="helix" evidence="6">
    <location>
        <begin position="78"/>
        <end position="81"/>
    </location>
</feature>
<feature type="helix" evidence="6">
    <location>
        <begin position="83"/>
        <end position="92"/>
    </location>
</feature>
<feature type="helix" evidence="6">
    <location>
        <begin position="97"/>
        <end position="114"/>
    </location>
</feature>
<feature type="helix" evidence="6">
    <location>
        <begin position="115"/>
        <end position="117"/>
    </location>
</feature>
<feature type="helix" evidence="6">
    <location>
        <begin position="120"/>
        <end position="138"/>
    </location>
</feature>
<keyword id="KW-0002">3D-structure</keyword>
<keyword id="KW-0349">Heme</keyword>
<keyword id="KW-0408">Iron</keyword>
<keyword id="KW-0479">Metal-binding</keyword>
<keyword id="KW-0561">Oxygen transport</keyword>
<keyword id="KW-0813">Transport</keyword>
<comment type="function">
    <text>Involved in oxygen transport from gills to the various peripheral tissues.</text>
</comment>
<comment type="subunit">
    <text>Heterotetramer of two alpha chains and two beta chains.</text>
</comment>
<comment type="tissue specificity">
    <text>Red blood cells.</text>
</comment>
<comment type="similarity">
    <text evidence="2">Belongs to the globin family.</text>
</comment>
<dbReference type="EMBL" id="AB023723">
    <property type="protein sequence ID" value="BAA75250.1"/>
    <property type="molecule type" value="mRNA"/>
</dbReference>
<dbReference type="PDB" id="1CG5">
    <property type="method" value="X-ray"/>
    <property type="resolution" value="1.60 A"/>
    <property type="chains" value="B=2-142"/>
</dbReference>
<dbReference type="PDB" id="1CG8">
    <property type="method" value="X-ray"/>
    <property type="resolution" value="1.90 A"/>
    <property type="chains" value="B=2-142"/>
</dbReference>
<dbReference type="PDBsum" id="1CG5"/>
<dbReference type="PDBsum" id="1CG8"/>
<dbReference type="SMR" id="P56692"/>
<dbReference type="MINT" id="P56692"/>
<dbReference type="EvolutionaryTrace" id="P56692"/>
<dbReference type="GO" id="GO:0072562">
    <property type="term" value="C:blood microparticle"/>
    <property type="evidence" value="ECO:0007669"/>
    <property type="project" value="TreeGrafter"/>
</dbReference>
<dbReference type="GO" id="GO:0031838">
    <property type="term" value="C:haptoglobin-hemoglobin complex"/>
    <property type="evidence" value="ECO:0007669"/>
    <property type="project" value="TreeGrafter"/>
</dbReference>
<dbReference type="GO" id="GO:0005833">
    <property type="term" value="C:hemoglobin complex"/>
    <property type="evidence" value="ECO:0007669"/>
    <property type="project" value="InterPro"/>
</dbReference>
<dbReference type="GO" id="GO:0031720">
    <property type="term" value="F:haptoglobin binding"/>
    <property type="evidence" value="ECO:0007669"/>
    <property type="project" value="TreeGrafter"/>
</dbReference>
<dbReference type="GO" id="GO:0020037">
    <property type="term" value="F:heme binding"/>
    <property type="evidence" value="ECO:0007669"/>
    <property type="project" value="InterPro"/>
</dbReference>
<dbReference type="GO" id="GO:0046872">
    <property type="term" value="F:metal ion binding"/>
    <property type="evidence" value="ECO:0007669"/>
    <property type="project" value="UniProtKB-KW"/>
</dbReference>
<dbReference type="GO" id="GO:0043177">
    <property type="term" value="F:organic acid binding"/>
    <property type="evidence" value="ECO:0007669"/>
    <property type="project" value="TreeGrafter"/>
</dbReference>
<dbReference type="GO" id="GO:0019825">
    <property type="term" value="F:oxygen binding"/>
    <property type="evidence" value="ECO:0007669"/>
    <property type="project" value="InterPro"/>
</dbReference>
<dbReference type="GO" id="GO:0005344">
    <property type="term" value="F:oxygen carrier activity"/>
    <property type="evidence" value="ECO:0007669"/>
    <property type="project" value="UniProtKB-KW"/>
</dbReference>
<dbReference type="GO" id="GO:0004601">
    <property type="term" value="F:peroxidase activity"/>
    <property type="evidence" value="ECO:0007669"/>
    <property type="project" value="TreeGrafter"/>
</dbReference>
<dbReference type="GO" id="GO:0042744">
    <property type="term" value="P:hydrogen peroxide catabolic process"/>
    <property type="evidence" value="ECO:0007669"/>
    <property type="project" value="TreeGrafter"/>
</dbReference>
<dbReference type="CDD" id="cd08925">
    <property type="entry name" value="Hb-beta-like"/>
    <property type="match status" value="1"/>
</dbReference>
<dbReference type="Gene3D" id="1.10.490.10">
    <property type="entry name" value="Globins"/>
    <property type="match status" value="1"/>
</dbReference>
<dbReference type="InterPro" id="IPR000971">
    <property type="entry name" value="Globin"/>
</dbReference>
<dbReference type="InterPro" id="IPR009050">
    <property type="entry name" value="Globin-like_sf"/>
</dbReference>
<dbReference type="InterPro" id="IPR012292">
    <property type="entry name" value="Globin/Proto"/>
</dbReference>
<dbReference type="InterPro" id="IPR002337">
    <property type="entry name" value="Hemoglobin_b"/>
</dbReference>
<dbReference type="InterPro" id="IPR050056">
    <property type="entry name" value="Hemoglobin_oxygen_transport"/>
</dbReference>
<dbReference type="PANTHER" id="PTHR11442">
    <property type="entry name" value="HEMOGLOBIN FAMILY MEMBER"/>
    <property type="match status" value="1"/>
</dbReference>
<dbReference type="Pfam" id="PF00042">
    <property type="entry name" value="Globin"/>
    <property type="match status" value="1"/>
</dbReference>
<dbReference type="SUPFAM" id="SSF46458">
    <property type="entry name" value="Globin-like"/>
    <property type="match status" value="1"/>
</dbReference>
<dbReference type="PROSITE" id="PS01033">
    <property type="entry name" value="GLOBIN"/>
    <property type="match status" value="1"/>
</dbReference>
<gene>
    <name type="primary">HBB</name>
</gene>
<sequence>MVKLSEDQEHYIKGVWKDVDHKQITAKALERVFVVYPWTTRLFSKLQGLFSANDIGVQQHADKVQRALGEAIDDLKKVEINFQNLSGKHQEIGVDTQNFKLLGQTFMVELALHYKKTFRPKEHAAAYKFFRLVAEALSSNYH</sequence>
<evidence type="ECO:0000250" key="1">
    <source>
        <dbReference type="UniProtKB" id="P80044"/>
    </source>
</evidence>
<evidence type="ECO:0000255" key="2">
    <source>
        <dbReference type="PROSITE-ProRule" id="PRU00238"/>
    </source>
</evidence>
<evidence type="ECO:0000269" key="3">
    <source>
    </source>
</evidence>
<evidence type="ECO:0007744" key="4">
    <source>
        <dbReference type="PDB" id="1CG5"/>
    </source>
</evidence>
<evidence type="ECO:0007744" key="5">
    <source>
        <dbReference type="PDB" id="1CG8"/>
    </source>
</evidence>
<evidence type="ECO:0007829" key="6">
    <source>
        <dbReference type="PDB" id="1CG5"/>
    </source>
</evidence>
<organism>
    <name type="scientific">Hemitrygon akajei</name>
    <name type="common">Red stingray</name>
    <name type="synonym">Dasyatis akajei</name>
    <dbReference type="NCBI Taxonomy" id="2704970"/>
    <lineage>
        <taxon>Eukaryota</taxon>
        <taxon>Metazoa</taxon>
        <taxon>Chordata</taxon>
        <taxon>Craniata</taxon>
        <taxon>Vertebrata</taxon>
        <taxon>Chondrichthyes</taxon>
        <taxon>Elasmobranchii</taxon>
        <taxon>Batoidea</taxon>
        <taxon>Myliobatiformes</taxon>
        <taxon>Dasyatidae</taxon>
        <taxon>Hemitrygon</taxon>
    </lineage>
</organism>
<protein>
    <recommendedName>
        <fullName>Hemoglobin subunit beta</fullName>
    </recommendedName>
    <alternativeName>
        <fullName>Beta-globin</fullName>
    </alternativeName>
    <alternativeName>
        <fullName>Hemoglobin beta chain</fullName>
    </alternativeName>
</protein>